<comment type="function">
    <text evidence="1">Negatively regulates transcription of bacterial ribonucleotide reductase nrd genes and operons by binding to NrdR-boxes.</text>
</comment>
<comment type="cofactor">
    <cofactor evidence="1">
        <name>Zn(2+)</name>
        <dbReference type="ChEBI" id="CHEBI:29105"/>
    </cofactor>
    <text evidence="1">Binds 1 zinc ion.</text>
</comment>
<comment type="similarity">
    <text evidence="1">Belongs to the NrdR family.</text>
</comment>
<proteinExistence type="inferred from homology"/>
<reference key="1">
    <citation type="journal article" date="2002" name="Proc. Natl. Acad. Sci. U.S.A.">
        <title>Complete genome sequence and comparative genomic analysis of an emerging human pathogen, serotype V Streptococcus agalactiae.</title>
        <authorList>
            <person name="Tettelin H."/>
            <person name="Masignani V."/>
            <person name="Cieslewicz M.J."/>
            <person name="Eisen J.A."/>
            <person name="Peterson S.N."/>
            <person name="Wessels M.R."/>
            <person name="Paulsen I.T."/>
            <person name="Nelson K.E."/>
            <person name="Margarit I."/>
            <person name="Read T.D."/>
            <person name="Madoff L.C."/>
            <person name="Wolf A.M."/>
            <person name="Beanan M.J."/>
            <person name="Brinkac L.M."/>
            <person name="Daugherty S.C."/>
            <person name="DeBoy R.T."/>
            <person name="Durkin A.S."/>
            <person name="Kolonay J.F."/>
            <person name="Madupu R."/>
            <person name="Lewis M.R."/>
            <person name="Radune D."/>
            <person name="Fedorova N.B."/>
            <person name="Scanlan D."/>
            <person name="Khouri H.M."/>
            <person name="Mulligan S."/>
            <person name="Carty H.A."/>
            <person name="Cline R.T."/>
            <person name="Van Aken S.E."/>
            <person name="Gill J."/>
            <person name="Scarselli M."/>
            <person name="Mora M."/>
            <person name="Iacobini E.T."/>
            <person name="Brettoni C."/>
            <person name="Galli G."/>
            <person name="Mariani M."/>
            <person name="Vegni F."/>
            <person name="Maione D."/>
            <person name="Rinaudo D."/>
            <person name="Rappuoli R."/>
            <person name="Telford J.L."/>
            <person name="Kasper D.L."/>
            <person name="Grandi G."/>
            <person name="Fraser C.M."/>
        </authorList>
    </citation>
    <scope>NUCLEOTIDE SEQUENCE [LARGE SCALE GENOMIC DNA]</scope>
    <source>
        <strain>ATCC BAA-611 / 2603 V/R</strain>
    </source>
</reference>
<gene>
    <name evidence="1" type="primary">nrdR</name>
    <name type="ordered locus">SAG1623</name>
</gene>
<dbReference type="EMBL" id="AE009948">
    <property type="protein sequence ID" value="AAN00487.1"/>
    <property type="molecule type" value="Genomic_DNA"/>
</dbReference>
<dbReference type="RefSeq" id="NP_688614.1">
    <property type="nucleotide sequence ID" value="NC_004116.1"/>
</dbReference>
<dbReference type="RefSeq" id="WP_001203682.1">
    <property type="nucleotide sequence ID" value="NC_004116.1"/>
</dbReference>
<dbReference type="SMR" id="Q8DY70"/>
<dbReference type="STRING" id="208435.SAG1623"/>
<dbReference type="GeneID" id="66886467"/>
<dbReference type="KEGG" id="sag:SAG1623"/>
<dbReference type="PATRIC" id="fig|208435.3.peg.1634"/>
<dbReference type="HOGENOM" id="CLU_108412_0_0_9"/>
<dbReference type="OrthoDB" id="9807461at2"/>
<dbReference type="Proteomes" id="UP000000821">
    <property type="component" value="Chromosome"/>
</dbReference>
<dbReference type="GO" id="GO:0005524">
    <property type="term" value="F:ATP binding"/>
    <property type="evidence" value="ECO:0007669"/>
    <property type="project" value="UniProtKB-KW"/>
</dbReference>
<dbReference type="GO" id="GO:0003677">
    <property type="term" value="F:DNA binding"/>
    <property type="evidence" value="ECO:0007669"/>
    <property type="project" value="UniProtKB-KW"/>
</dbReference>
<dbReference type="GO" id="GO:0008270">
    <property type="term" value="F:zinc ion binding"/>
    <property type="evidence" value="ECO:0007669"/>
    <property type="project" value="UniProtKB-UniRule"/>
</dbReference>
<dbReference type="GO" id="GO:0045892">
    <property type="term" value="P:negative regulation of DNA-templated transcription"/>
    <property type="evidence" value="ECO:0007669"/>
    <property type="project" value="UniProtKB-UniRule"/>
</dbReference>
<dbReference type="HAMAP" id="MF_00440">
    <property type="entry name" value="NrdR"/>
    <property type="match status" value="1"/>
</dbReference>
<dbReference type="InterPro" id="IPR005144">
    <property type="entry name" value="ATP-cone_dom"/>
</dbReference>
<dbReference type="InterPro" id="IPR055173">
    <property type="entry name" value="NrdR-like_N"/>
</dbReference>
<dbReference type="InterPro" id="IPR003796">
    <property type="entry name" value="RNR_NrdR-like"/>
</dbReference>
<dbReference type="NCBIfam" id="TIGR00244">
    <property type="entry name" value="transcriptional regulator NrdR"/>
    <property type="match status" value="1"/>
</dbReference>
<dbReference type="PANTHER" id="PTHR30455">
    <property type="entry name" value="TRANSCRIPTIONAL REPRESSOR NRDR"/>
    <property type="match status" value="1"/>
</dbReference>
<dbReference type="PANTHER" id="PTHR30455:SF2">
    <property type="entry name" value="TRANSCRIPTIONAL REPRESSOR NRDR"/>
    <property type="match status" value="1"/>
</dbReference>
<dbReference type="Pfam" id="PF03477">
    <property type="entry name" value="ATP-cone"/>
    <property type="match status" value="1"/>
</dbReference>
<dbReference type="Pfam" id="PF22811">
    <property type="entry name" value="Zn_ribbon_NrdR"/>
    <property type="match status" value="1"/>
</dbReference>
<dbReference type="PROSITE" id="PS51161">
    <property type="entry name" value="ATP_CONE"/>
    <property type="match status" value="1"/>
</dbReference>
<accession>Q8DY70</accession>
<evidence type="ECO:0000255" key="1">
    <source>
        <dbReference type="HAMAP-Rule" id="MF_00440"/>
    </source>
</evidence>
<protein>
    <recommendedName>
        <fullName evidence="1">Transcriptional repressor NrdR</fullName>
    </recommendedName>
</protein>
<organism>
    <name type="scientific">Streptococcus agalactiae serotype V (strain ATCC BAA-611 / 2603 V/R)</name>
    <dbReference type="NCBI Taxonomy" id="208435"/>
    <lineage>
        <taxon>Bacteria</taxon>
        <taxon>Bacillati</taxon>
        <taxon>Bacillota</taxon>
        <taxon>Bacilli</taxon>
        <taxon>Lactobacillales</taxon>
        <taxon>Streptococcaceae</taxon>
        <taxon>Streptococcus</taxon>
    </lineage>
</organism>
<feature type="chain" id="PRO_0000182355" description="Transcriptional repressor NrdR">
    <location>
        <begin position="1"/>
        <end position="159"/>
    </location>
</feature>
<feature type="domain" description="ATP-cone" evidence="1">
    <location>
        <begin position="49"/>
        <end position="139"/>
    </location>
</feature>
<feature type="zinc finger region" evidence="1">
    <location>
        <begin position="3"/>
        <end position="34"/>
    </location>
</feature>
<sequence>MRCPKCGYNKSSVVDSRQAEEGTTIRRRRECEKCGNRFTTFERLEELPLLVIKKDGTREQFSRDKILNGIIQSAQKRPVSSEDIENCILRIERKIRSEYEDEVSSITIGNLVMDELAELDEITYVRFASVYKSFKDVDEIEELLQQITKRVRSKKSGSV</sequence>
<keyword id="KW-0067">ATP-binding</keyword>
<keyword id="KW-0238">DNA-binding</keyword>
<keyword id="KW-0479">Metal-binding</keyword>
<keyword id="KW-0547">Nucleotide-binding</keyword>
<keyword id="KW-1185">Reference proteome</keyword>
<keyword id="KW-0678">Repressor</keyword>
<keyword id="KW-0804">Transcription</keyword>
<keyword id="KW-0805">Transcription regulation</keyword>
<keyword id="KW-0862">Zinc</keyword>
<keyword id="KW-0863">Zinc-finger</keyword>
<name>NRDR_STRA5</name>